<keyword id="KW-0963">Cytoplasm</keyword>
<keyword id="KW-0456">Lyase</keyword>
<keyword id="KW-0704">Schiff base</keyword>
<name>DEOC_PSEU2</name>
<feature type="chain" id="PRO_0000231561" description="Deoxyribose-phosphate aldolase">
    <location>
        <begin position="1"/>
        <end position="226"/>
    </location>
</feature>
<feature type="active site" description="Proton donor/acceptor" evidence="1">
    <location>
        <position position="95"/>
    </location>
</feature>
<feature type="active site" description="Schiff-base intermediate with acetaldehyde" evidence="1">
    <location>
        <position position="157"/>
    </location>
</feature>
<feature type="active site" description="Proton donor/acceptor" evidence="1">
    <location>
        <position position="186"/>
    </location>
</feature>
<feature type="mutagenesis site" description="Decreases synthesis of CTeHP." evidence="2">
    <original>T</original>
    <variation>L</variation>
    <location>
        <position position="16"/>
    </location>
</feature>
<feature type="mutagenesis site" description="Exhibits 12% higher activity for synthesis of CTeHP." evidence="2">
    <original>V</original>
    <variation>K</variation>
    <location>
        <position position="66"/>
    </location>
</feature>
<feature type="mutagenesis site" description="Decreases synthesis of CTeHP." evidence="2">
    <original>F</original>
    <variation>R</variation>
    <location>
        <position position="69"/>
    </location>
</feature>
<feature type="mutagenesis site" description="Decreases synthesis of CTeHP." evidence="2">
    <original>S</original>
    <variation>V</variation>
    <location>
        <position position="188"/>
    </location>
</feature>
<feature type="mutagenesis site" description="Exhibits higher activity toward DR5P. Decreases synthesis of CTeHP." evidence="2">
    <original>G</original>
    <variation>R</variation>
    <location>
        <position position="189"/>
    </location>
</feature>
<protein>
    <recommendedName>
        <fullName evidence="1 3">Deoxyribose-phosphate aldolase</fullName>
        <shortName evidence="1 3">DERA</shortName>
        <ecNumber evidence="1 2">4.1.2.4</ecNumber>
    </recommendedName>
    <alternativeName>
        <fullName evidence="1 3">2-deoxy-D-ribose 5-phosphate aldolase</fullName>
    </alternativeName>
    <alternativeName>
        <fullName evidence="1">Phosphodeoxyriboaldolase</fullName>
        <shortName evidence="1">Deoxyriboaldolase</shortName>
    </alternativeName>
</protein>
<comment type="function">
    <text evidence="1 2">Catalyzes a reversible aldol reaction between acetaldehyde and D-glyceraldehyde 3-phosphate to generate 2-deoxy-D-ribose 5-phosphate.</text>
</comment>
<comment type="function">
    <text evidence="2">In vitro, DERA can catalyze the aldol condensation of chloroacetaldehyde (CHAD) and acetaldehyde (ACD), yielding (S)-4-chloro-3-hydroxybutanal ((S)-CHB), which can combine with another aldehyde to form (3R,5S)-6-chloro-2,4,6-trideoxyhexapyranose (CTeHP), a key intermediate for statin drugs.</text>
</comment>
<comment type="catalytic activity">
    <reaction evidence="1 2">
        <text>2-deoxy-D-ribose 5-phosphate = D-glyceraldehyde 3-phosphate + acetaldehyde</text>
        <dbReference type="Rhea" id="RHEA:12821"/>
        <dbReference type="ChEBI" id="CHEBI:15343"/>
        <dbReference type="ChEBI" id="CHEBI:59776"/>
        <dbReference type="ChEBI" id="CHEBI:62877"/>
        <dbReference type="EC" id="4.1.2.4"/>
    </reaction>
</comment>
<comment type="activity regulation">
    <text evidence="2">Partially inhibited by acetaldehyde (PubMed:33677085). After incubation for 2, 4 and 6 hours in 300 mM acetaldehyde at 25 degrees Celsius, retains approximately 61.32%, 42.33% and 34.73% of the initial 2-deoxy-D-ribose-5-phosphate (DR5P) cleavage activity, respectively (PubMed:33677085).</text>
</comment>
<comment type="biophysicochemical properties">
    <kinetics>
        <KM evidence="2">0.085 mM for 2-deoxy-D-ribose 5-phosphate</KM>
    </kinetics>
    <phDependence>
        <text evidence="2">Optimum pH is 7.5.</text>
    </phDependence>
    <temperatureDependence>
        <text evidence="2">Optimum temperature is 30 degrees Celsius.</text>
    </temperatureDependence>
</comment>
<comment type="pathway">
    <text evidence="1">Carbohydrate degradation; 2-deoxy-D-ribose 1-phosphate degradation; D-glyceraldehyde 3-phosphate and acetaldehyde from 2-deoxy-alpha-D-ribose 1-phosphate: step 2/2.</text>
</comment>
<comment type="subcellular location">
    <subcellularLocation>
        <location evidence="1">Cytoplasm</location>
    </subcellularLocation>
</comment>
<comment type="biotechnology">
    <text evidence="2">DERA is a potentially valuable biocatalyst for synthetic chiral compounds. However, the poor tolerance of acetaldehyde limits its applications as an industrial biocatalyst. Mutations that improve the aldehyde tolerance represent an effective strategy for enhancing DERA activity.</text>
</comment>
<comment type="similarity">
    <text evidence="1">Belongs to the DeoC/FbaB aldolase family. DeoC type 1 subfamily.</text>
</comment>
<gene>
    <name evidence="1 3" type="primary">deoC</name>
    <name type="ordered locus">Psyr_4491</name>
</gene>
<proteinExistence type="evidence at protein level"/>
<dbReference type="EC" id="4.1.2.4" evidence="1 2"/>
<dbReference type="EMBL" id="CP000075">
    <property type="protein sequence ID" value="AAY39521.1"/>
    <property type="molecule type" value="Genomic_DNA"/>
</dbReference>
<dbReference type="RefSeq" id="WP_003436656.1">
    <property type="nucleotide sequence ID" value="NC_007005.1"/>
</dbReference>
<dbReference type="RefSeq" id="YP_237559.1">
    <property type="nucleotide sequence ID" value="NC_007005.1"/>
</dbReference>
<dbReference type="SMR" id="Q4ZMV1"/>
<dbReference type="STRING" id="205918.Psyr_4491"/>
<dbReference type="KEGG" id="psb:Psyr_4491"/>
<dbReference type="PATRIC" id="fig|205918.7.peg.4632"/>
<dbReference type="eggNOG" id="COG0274">
    <property type="taxonomic scope" value="Bacteria"/>
</dbReference>
<dbReference type="HOGENOM" id="CLU_053595_0_0_6"/>
<dbReference type="OrthoDB" id="6579831at2"/>
<dbReference type="UniPathway" id="UPA00002">
    <property type="reaction ID" value="UER00468"/>
</dbReference>
<dbReference type="Proteomes" id="UP000000426">
    <property type="component" value="Chromosome"/>
</dbReference>
<dbReference type="GO" id="GO:0005737">
    <property type="term" value="C:cytoplasm"/>
    <property type="evidence" value="ECO:0007669"/>
    <property type="project" value="UniProtKB-SubCell"/>
</dbReference>
<dbReference type="GO" id="GO:0004139">
    <property type="term" value="F:deoxyribose-phosphate aldolase activity"/>
    <property type="evidence" value="ECO:0007669"/>
    <property type="project" value="UniProtKB-UniRule"/>
</dbReference>
<dbReference type="GO" id="GO:0006018">
    <property type="term" value="P:2-deoxyribose 1-phosphate catabolic process"/>
    <property type="evidence" value="ECO:0007669"/>
    <property type="project" value="UniProtKB-UniRule"/>
</dbReference>
<dbReference type="GO" id="GO:0016052">
    <property type="term" value="P:carbohydrate catabolic process"/>
    <property type="evidence" value="ECO:0007669"/>
    <property type="project" value="TreeGrafter"/>
</dbReference>
<dbReference type="GO" id="GO:0009264">
    <property type="term" value="P:deoxyribonucleotide catabolic process"/>
    <property type="evidence" value="ECO:0007669"/>
    <property type="project" value="InterPro"/>
</dbReference>
<dbReference type="CDD" id="cd00959">
    <property type="entry name" value="DeoC"/>
    <property type="match status" value="1"/>
</dbReference>
<dbReference type="FunFam" id="3.20.20.70:FF:000044">
    <property type="entry name" value="Deoxyribose-phosphate aldolase"/>
    <property type="match status" value="1"/>
</dbReference>
<dbReference type="Gene3D" id="3.20.20.70">
    <property type="entry name" value="Aldolase class I"/>
    <property type="match status" value="1"/>
</dbReference>
<dbReference type="HAMAP" id="MF_00114">
    <property type="entry name" value="DeoC_type1"/>
    <property type="match status" value="1"/>
</dbReference>
<dbReference type="InterPro" id="IPR013785">
    <property type="entry name" value="Aldolase_TIM"/>
</dbReference>
<dbReference type="InterPro" id="IPR011343">
    <property type="entry name" value="DeoC"/>
</dbReference>
<dbReference type="InterPro" id="IPR002915">
    <property type="entry name" value="DeoC/FbaB/LacD_aldolase"/>
</dbReference>
<dbReference type="InterPro" id="IPR028581">
    <property type="entry name" value="DeoC_typeI"/>
</dbReference>
<dbReference type="NCBIfam" id="TIGR00126">
    <property type="entry name" value="deoC"/>
    <property type="match status" value="1"/>
</dbReference>
<dbReference type="PANTHER" id="PTHR10889">
    <property type="entry name" value="DEOXYRIBOSE-PHOSPHATE ALDOLASE"/>
    <property type="match status" value="1"/>
</dbReference>
<dbReference type="PANTHER" id="PTHR10889:SF1">
    <property type="entry name" value="DEOXYRIBOSE-PHOSPHATE ALDOLASE"/>
    <property type="match status" value="1"/>
</dbReference>
<dbReference type="Pfam" id="PF01791">
    <property type="entry name" value="DeoC"/>
    <property type="match status" value="1"/>
</dbReference>
<dbReference type="PIRSF" id="PIRSF001357">
    <property type="entry name" value="DeoC"/>
    <property type="match status" value="1"/>
</dbReference>
<dbReference type="SMART" id="SM01133">
    <property type="entry name" value="DeoC"/>
    <property type="match status" value="1"/>
</dbReference>
<dbReference type="SUPFAM" id="SSF51569">
    <property type="entry name" value="Aldolase"/>
    <property type="match status" value="1"/>
</dbReference>
<evidence type="ECO:0000255" key="1">
    <source>
        <dbReference type="HAMAP-Rule" id="MF_00114"/>
    </source>
</evidence>
<evidence type="ECO:0000269" key="2">
    <source>
    </source>
</evidence>
<evidence type="ECO:0000303" key="3">
    <source>
    </source>
</evidence>
<organism>
    <name type="scientific">Pseudomonas syringae pv. syringae (strain B728a)</name>
    <dbReference type="NCBI Taxonomy" id="205918"/>
    <lineage>
        <taxon>Bacteria</taxon>
        <taxon>Pseudomonadati</taxon>
        <taxon>Pseudomonadota</taxon>
        <taxon>Gammaproteobacteria</taxon>
        <taxon>Pseudomonadales</taxon>
        <taxon>Pseudomonadaceae</taxon>
        <taxon>Pseudomonas</taxon>
        <taxon>Pseudomonas syringae</taxon>
    </lineage>
</organism>
<reference key="1">
    <citation type="journal article" date="2005" name="Proc. Natl. Acad. Sci. U.S.A.">
        <title>Comparison of the complete genome sequences of Pseudomonas syringae pv. syringae B728a and pv. tomato DC3000.</title>
        <authorList>
            <person name="Feil H."/>
            <person name="Feil W.S."/>
            <person name="Chain P."/>
            <person name="Larimer F."/>
            <person name="Dibartolo G."/>
            <person name="Copeland A."/>
            <person name="Lykidis A."/>
            <person name="Trong S."/>
            <person name="Nolan M."/>
            <person name="Goltsman E."/>
            <person name="Thiel J."/>
            <person name="Malfatti S."/>
            <person name="Loper J.E."/>
            <person name="Lapidus A."/>
            <person name="Detter J.C."/>
            <person name="Land M."/>
            <person name="Richardson P.M."/>
            <person name="Kyrpides N.C."/>
            <person name="Ivanova N."/>
            <person name="Lindow S.E."/>
        </authorList>
    </citation>
    <scope>NUCLEOTIDE SEQUENCE [LARGE SCALE GENOMIC DNA]</scope>
    <source>
        <strain>B728a</strain>
    </source>
</reference>
<reference key="2">
    <citation type="journal article" date="2021" name="Protein Expr. Purif.">
        <title>Rational design to enhance the catalytic activity of 2-deoxy-D-ribose-5-phosphate aldolase from Pseudomonas syringae pv. syringae B728a.</title>
        <authorList>
            <person name="He F.F."/>
            <person name="Xin Y.Y."/>
            <person name="Ma Y.X."/>
            <person name="Yang S."/>
            <person name="Fei H."/>
        </authorList>
    </citation>
    <scope>FUNCTION</scope>
    <scope>CATALYTIC ACTIVITY</scope>
    <scope>ACTIVITY REGULATION</scope>
    <scope>BIOPHYSICOCHEMICAL PROPERTIES</scope>
    <scope>BIOTECHNOLOGY</scope>
    <scope>MUTAGENESIS OF THR-16; VAL-66; PHE-69; SER-188 AND GLY-189</scope>
    <source>
        <strain>B728a</strain>
    </source>
</reference>
<accession>Q4ZMV1</accession>
<sequence>MNSLEPAALAQAIDHTLLAADASREQIATLCAEAREHGFYSVCVNSSQVPFAARQLAGSAVKVCAVVGFPLGAGLSASKASEAALTIAAGAQEIDMVLNIGWLKDGLFDEVRDDIAAVLQACGKVPLKVILETCLLDEAQKVRACEICRELGVAFVKTSTGFSRSGATLEDVALMRRVVGPDIGVKASGGVRDVATARAMIEAGATRLGTSSGIAIVTGAGTGAGY</sequence>